<organism>
    <name type="scientific">Cyanothece sp. (strain PCC 7425 / ATCC 29141)</name>
    <dbReference type="NCBI Taxonomy" id="395961"/>
    <lineage>
        <taxon>Bacteria</taxon>
        <taxon>Bacillati</taxon>
        <taxon>Cyanobacteriota</taxon>
        <taxon>Cyanophyceae</taxon>
        <taxon>Gomontiellales</taxon>
        <taxon>Cyanothecaceae</taxon>
        <taxon>Cyanothece</taxon>
    </lineage>
</organism>
<comment type="similarity">
    <text evidence="1">Belongs to the bacterial ribosomal protein bL34 family.</text>
</comment>
<accession>B8HR51</accession>
<feature type="chain" id="PRO_1000134439" description="Large ribosomal subunit protein bL34">
    <location>
        <begin position="1"/>
        <end position="45"/>
    </location>
</feature>
<feature type="region of interest" description="Disordered" evidence="2">
    <location>
        <begin position="23"/>
        <end position="45"/>
    </location>
</feature>
<protein>
    <recommendedName>
        <fullName evidence="1">Large ribosomal subunit protein bL34</fullName>
    </recommendedName>
    <alternativeName>
        <fullName evidence="3">50S ribosomal protein L34</fullName>
    </alternativeName>
</protein>
<reference key="1">
    <citation type="journal article" date="2011" name="MBio">
        <title>Novel metabolic attributes of the genus Cyanothece, comprising a group of unicellular nitrogen-fixing Cyanobacteria.</title>
        <authorList>
            <person name="Bandyopadhyay A."/>
            <person name="Elvitigala T."/>
            <person name="Welsh E."/>
            <person name="Stockel J."/>
            <person name="Liberton M."/>
            <person name="Min H."/>
            <person name="Sherman L.A."/>
            <person name="Pakrasi H.B."/>
        </authorList>
    </citation>
    <scope>NUCLEOTIDE SEQUENCE [LARGE SCALE GENOMIC DNA]</scope>
    <source>
        <strain>PCC 7425 / ATCC 29141</strain>
    </source>
</reference>
<name>RL34_CYAP4</name>
<sequence length="45" mass="5255">MTQRTLGGTVRKRKRTSGFRARMKTKNGRRVIQARRSRGRVRLAV</sequence>
<dbReference type="EMBL" id="CP001344">
    <property type="protein sequence ID" value="ACL47559.1"/>
    <property type="molecule type" value="Genomic_DNA"/>
</dbReference>
<dbReference type="SMR" id="B8HR51"/>
<dbReference type="STRING" id="395961.Cyan7425_5268"/>
<dbReference type="KEGG" id="cyn:Cyan7425_5268"/>
<dbReference type="eggNOG" id="COG0230">
    <property type="taxonomic scope" value="Bacteria"/>
</dbReference>
<dbReference type="HOGENOM" id="CLU_129938_2_1_3"/>
<dbReference type="OrthoDB" id="9804164at2"/>
<dbReference type="GO" id="GO:1990904">
    <property type="term" value="C:ribonucleoprotein complex"/>
    <property type="evidence" value="ECO:0007669"/>
    <property type="project" value="UniProtKB-KW"/>
</dbReference>
<dbReference type="GO" id="GO:0005840">
    <property type="term" value="C:ribosome"/>
    <property type="evidence" value="ECO:0007669"/>
    <property type="project" value="UniProtKB-KW"/>
</dbReference>
<dbReference type="GO" id="GO:0003735">
    <property type="term" value="F:structural constituent of ribosome"/>
    <property type="evidence" value="ECO:0007669"/>
    <property type="project" value="InterPro"/>
</dbReference>
<dbReference type="GO" id="GO:0006412">
    <property type="term" value="P:translation"/>
    <property type="evidence" value="ECO:0007669"/>
    <property type="project" value="UniProtKB-UniRule"/>
</dbReference>
<dbReference type="Gene3D" id="1.10.287.3980">
    <property type="match status" value="1"/>
</dbReference>
<dbReference type="HAMAP" id="MF_00391">
    <property type="entry name" value="Ribosomal_bL34"/>
    <property type="match status" value="1"/>
</dbReference>
<dbReference type="InterPro" id="IPR000271">
    <property type="entry name" value="Ribosomal_bL34"/>
</dbReference>
<dbReference type="InterPro" id="IPR020939">
    <property type="entry name" value="Ribosomal_bL34_CS"/>
</dbReference>
<dbReference type="NCBIfam" id="TIGR01030">
    <property type="entry name" value="rpmH_bact"/>
    <property type="match status" value="1"/>
</dbReference>
<dbReference type="Pfam" id="PF00468">
    <property type="entry name" value="Ribosomal_L34"/>
    <property type="match status" value="1"/>
</dbReference>
<dbReference type="PROSITE" id="PS00784">
    <property type="entry name" value="RIBOSOMAL_L34"/>
    <property type="match status" value="1"/>
</dbReference>
<gene>
    <name evidence="1" type="primary">rpmH</name>
    <name evidence="1" type="synonym">rpl34</name>
    <name type="ordered locus">Cyan7425_5268</name>
</gene>
<proteinExistence type="inferred from homology"/>
<evidence type="ECO:0000255" key="1">
    <source>
        <dbReference type="HAMAP-Rule" id="MF_00391"/>
    </source>
</evidence>
<evidence type="ECO:0000256" key="2">
    <source>
        <dbReference type="SAM" id="MobiDB-lite"/>
    </source>
</evidence>
<evidence type="ECO:0000305" key="3"/>
<keyword id="KW-0687">Ribonucleoprotein</keyword>
<keyword id="KW-0689">Ribosomal protein</keyword>